<comment type="function">
    <text>Core component of nucleosome. Nucleosomes wrap and compact DNA into chromatin, limiting DNA accessibility to the cellular machineries which require DNA as a template. Histones thereby play a central role in transcription regulation, DNA repair, DNA replication and chromosomal stability. DNA accessibility is regulated via a complex set of post-translational modifications of histones, also called histone code, and nucleosome remodeling.</text>
</comment>
<comment type="subunit">
    <text>The nucleosome is a histone octamer containing two molecules each of H2A, H2B, H3 and H4 assembled in one H3-H4 heterotetramer and two H2A-H2B heterodimers. The octamer wraps approximately 147 bp of DNA.</text>
</comment>
<comment type="subcellular location">
    <subcellularLocation>
        <location evidence="1">Nucleus</location>
    </subcellularLocation>
    <subcellularLocation>
        <location evidence="1">Chromosome</location>
    </subcellularLocation>
</comment>
<comment type="PTM">
    <text evidence="1">Phosphorylated to form H3S10ph. H3S10ph promotes subsequent H3K14ac formation and is required for transcriptional activation through TBP recruitment to the promoters (By similarity).</text>
</comment>
<comment type="PTM">
    <text evidence="1">Mono-, di- and trimethylated by the COMPASS complex to form H3K4me1/2/3. H3K4me activates gene expression by regulating transcription elongation and plays a role in telomere length maintenance. H3K4me enrichment correlates with transcription levels, and occurs in a 5' to 3' gradient with H3K4me3 enrichment at the 5'-end of genes, shifting to H3K4me2 and then H3K4me1. Methylated by set2 to form H3K36me. H3K36me represses gene expression. Methylated by dot1 to form H3K79me. H3K79me is required for association of SIR proteins with telomeric regions and for telomeric silencing. The COMPASS-mediated formation of H3K4me2/3 and the dot1-mediated formation of H3K79me require H2BK123ub1 (By similarity).</text>
</comment>
<comment type="PTM">
    <text evidence="1">Acetylation of histone H3 leads to transcriptional activation. H3K14ac formation by gcn5 is promoted by H3S10ph. H3K14ac can also be formed by esa1. H3K56ac formation occurs predominantly in newly synthesized H3 molecules during G1, S and G2/M of the cell cycle and may be involved in DNA repair (By similarity).</text>
</comment>
<comment type="similarity">
    <text evidence="3">Belongs to the histone H3 family.</text>
</comment>
<comment type="caution">
    <text evidence="3">To ensure consistency between histone entries, we follow the 'Brno' nomenclature for histone modifications, with positions referring to those used in the literature for the 'closest' model organism. Due to slight variations in histone sequences between organisms and to the presence of initiator methionine in UniProtKB/Swiss-Prot sequences, the actual positions of modified amino acids in the sequence generally differ. In this entry the following conventions are used: H3K4me1/2/3 = mono-, di- and trimethylated Lys-5; H3K9ac = acetylated Lys-10; H3K9me1 = monomethylated Lys-10; H3S10ph = phosphorylated Ser-11; H3K14ac = acetylated Lys-15; H3K14me2 = dimethylated Lys-15; H3K18ac = acetylated Lys-19; H3K18me1 = monomethylated Lys-19; H3K23ac = acetylated Lys-24; H3K23me1 = monomethylated Lys-24; H3K27ac = acetylated Lys-28; H3K27me1/2/3 = mono-, di- and trimethylated Lys-28; H3K36ac = acetylated Lys-37; H3K36me1/2/3 = mono-, di- and trimethylated Lys-37; H3K56ac = acetylated Lys-57; H3K64ac = acetylated Lys-65; H3K79me1/2/3 = mono-, di- and trimethylated Lys-80.</text>
</comment>
<organism>
    <name type="scientific">Aspergillus fumigatus (strain ATCC MYA-4609 / CBS 101355 / FGSC A1100 / Af293)</name>
    <name type="common">Neosartorya fumigata</name>
    <dbReference type="NCBI Taxonomy" id="330879"/>
    <lineage>
        <taxon>Eukaryota</taxon>
        <taxon>Fungi</taxon>
        <taxon>Dikarya</taxon>
        <taxon>Ascomycota</taxon>
        <taxon>Pezizomycotina</taxon>
        <taxon>Eurotiomycetes</taxon>
        <taxon>Eurotiomycetidae</taxon>
        <taxon>Eurotiales</taxon>
        <taxon>Aspergillaceae</taxon>
        <taxon>Aspergillus</taxon>
        <taxon>Aspergillus subgen. Fumigati</taxon>
    </lineage>
</organism>
<reference key="1">
    <citation type="journal article" date="2004" name="Fungal Genet. Biol.">
        <title>Insight into the genome of Aspergillus fumigatus: analysis of a 922 kb region encompassing the nitrate assimilation gene cluster.</title>
        <authorList>
            <person name="Pain A."/>
            <person name="Woodward J.R."/>
            <person name="Quail M.A."/>
            <person name="Anderson M.J."/>
            <person name="Clark R."/>
            <person name="Collins M."/>
            <person name="Fosker N."/>
            <person name="Fraser A."/>
            <person name="Harris D.E."/>
            <person name="Larke N."/>
            <person name="Murphy L.D."/>
            <person name="Humphray S."/>
            <person name="O'Neil S."/>
            <person name="Pertea M."/>
            <person name="Price C."/>
            <person name="Rabbinowitsch E."/>
            <person name="Rajandream M.A."/>
            <person name="Salzberg S.L."/>
            <person name="Saunders D."/>
            <person name="Seeger K."/>
            <person name="Sharp S."/>
            <person name="Warren T."/>
            <person name="Denning D.W."/>
            <person name="Barrell B.G."/>
            <person name="Hall N."/>
        </authorList>
    </citation>
    <scope>NUCLEOTIDE SEQUENCE [LARGE SCALE GENOMIC DNA]</scope>
    <source>
        <strain>ATCC MYA-4609 / CBS 101355 / FGSC A1100 / Af293</strain>
    </source>
</reference>
<reference key="2">
    <citation type="journal article" date="2005" name="Nature">
        <title>Genomic sequence of the pathogenic and allergenic filamentous fungus Aspergillus fumigatus.</title>
        <authorList>
            <person name="Nierman W.C."/>
            <person name="Pain A."/>
            <person name="Anderson M.J."/>
            <person name="Wortman J.R."/>
            <person name="Kim H.S."/>
            <person name="Arroyo J."/>
            <person name="Berriman M."/>
            <person name="Abe K."/>
            <person name="Archer D.B."/>
            <person name="Bermejo C."/>
            <person name="Bennett J.W."/>
            <person name="Bowyer P."/>
            <person name="Chen D."/>
            <person name="Collins M."/>
            <person name="Coulsen R."/>
            <person name="Davies R."/>
            <person name="Dyer P.S."/>
            <person name="Farman M.L."/>
            <person name="Fedorova N."/>
            <person name="Fedorova N.D."/>
            <person name="Feldblyum T.V."/>
            <person name="Fischer R."/>
            <person name="Fosker N."/>
            <person name="Fraser A."/>
            <person name="Garcia J.L."/>
            <person name="Garcia M.J."/>
            <person name="Goble A."/>
            <person name="Goldman G.H."/>
            <person name="Gomi K."/>
            <person name="Griffith-Jones S."/>
            <person name="Gwilliam R."/>
            <person name="Haas B.J."/>
            <person name="Haas H."/>
            <person name="Harris D.E."/>
            <person name="Horiuchi H."/>
            <person name="Huang J."/>
            <person name="Humphray S."/>
            <person name="Jimenez J."/>
            <person name="Keller N."/>
            <person name="Khouri H."/>
            <person name="Kitamoto K."/>
            <person name="Kobayashi T."/>
            <person name="Konzack S."/>
            <person name="Kulkarni R."/>
            <person name="Kumagai T."/>
            <person name="Lafton A."/>
            <person name="Latge J.-P."/>
            <person name="Li W."/>
            <person name="Lord A."/>
            <person name="Lu C."/>
            <person name="Majoros W.H."/>
            <person name="May G.S."/>
            <person name="Miller B.L."/>
            <person name="Mohamoud Y."/>
            <person name="Molina M."/>
            <person name="Monod M."/>
            <person name="Mouyna I."/>
            <person name="Mulligan S."/>
            <person name="Murphy L.D."/>
            <person name="O'Neil S."/>
            <person name="Paulsen I."/>
            <person name="Penalva M.A."/>
            <person name="Pertea M."/>
            <person name="Price C."/>
            <person name="Pritchard B.L."/>
            <person name="Quail M.A."/>
            <person name="Rabbinowitsch E."/>
            <person name="Rawlins N."/>
            <person name="Rajandream M.A."/>
            <person name="Reichard U."/>
            <person name="Renauld H."/>
            <person name="Robson G.D."/>
            <person name="Rodriguez de Cordoba S."/>
            <person name="Rodriguez-Pena J.M."/>
            <person name="Ronning C.M."/>
            <person name="Rutter S."/>
            <person name="Salzberg S.L."/>
            <person name="Sanchez M."/>
            <person name="Sanchez-Ferrero J.C."/>
            <person name="Saunders D."/>
            <person name="Seeger K."/>
            <person name="Squares R."/>
            <person name="Squares S."/>
            <person name="Takeuchi M."/>
            <person name="Tekaia F."/>
            <person name="Turner G."/>
            <person name="Vazquez de Aldana C.R."/>
            <person name="Weidman J."/>
            <person name="White O."/>
            <person name="Woodward J.R."/>
            <person name="Yu J.-H."/>
            <person name="Fraser C.M."/>
            <person name="Galagan J.E."/>
            <person name="Asai K."/>
            <person name="Machida M."/>
            <person name="Hall N."/>
            <person name="Barrell B.G."/>
            <person name="Denning D.W."/>
        </authorList>
    </citation>
    <scope>NUCLEOTIDE SEQUENCE [LARGE SCALE GENOMIC DNA]</scope>
    <source>
        <strain>ATCC MYA-4609 / CBS 101355 / FGSC A1100 / Af293</strain>
    </source>
</reference>
<keyword id="KW-0007">Acetylation</keyword>
<keyword id="KW-0158">Chromosome</keyword>
<keyword id="KW-0238">DNA-binding</keyword>
<keyword id="KW-0488">Methylation</keyword>
<keyword id="KW-0544">Nucleosome core</keyword>
<keyword id="KW-0539">Nucleus</keyword>
<keyword id="KW-0597">Phosphoprotein</keyword>
<keyword id="KW-1185">Reference proteome</keyword>
<evidence type="ECO:0000250" key="1"/>
<evidence type="ECO:0000256" key="2">
    <source>
        <dbReference type="SAM" id="MobiDB-lite"/>
    </source>
</evidence>
<evidence type="ECO:0000305" key="3"/>
<accession>P61832</accession>
<accession>Q4WS71</accession>
<sequence>MARTKQTARKSTGGKAPRKQLASKAARKAAPSTGGVKKPHRYKPGTVALREIRRYQKSTELLIRKLPFQRLVREIAQDFKSDLRFQSSAIGALQESVEAYLVSLFEDTNLCAIHAKRVTIQSKDIQLARRLRGERS</sequence>
<protein>
    <recommendedName>
        <fullName>Histone H3</fullName>
    </recommendedName>
</protein>
<dbReference type="EMBL" id="BX649607">
    <property type="protein sequence ID" value="CAD29612.1"/>
    <property type="molecule type" value="Genomic_DNA"/>
</dbReference>
<dbReference type="EMBL" id="AAHF01000004">
    <property type="protein sequence ID" value="EAL90711.1"/>
    <property type="molecule type" value="Genomic_DNA"/>
</dbReference>
<dbReference type="RefSeq" id="XP_752749.1">
    <property type="nucleotide sequence ID" value="XM_747656.1"/>
</dbReference>
<dbReference type="SMR" id="P61832"/>
<dbReference type="FunCoup" id="P61832">
    <property type="interactions" value="840"/>
</dbReference>
<dbReference type="STRING" id="330879.P61832"/>
<dbReference type="EnsemblFungi" id="EAL90711">
    <property type="protein sequence ID" value="EAL90711"/>
    <property type="gene ID" value="AFUA_1G13790"/>
</dbReference>
<dbReference type="GeneID" id="3510613"/>
<dbReference type="KEGG" id="afm:AFUA_1G13790"/>
<dbReference type="VEuPathDB" id="FungiDB:Afu1g13790"/>
<dbReference type="eggNOG" id="KOG1745">
    <property type="taxonomic scope" value="Eukaryota"/>
</dbReference>
<dbReference type="HOGENOM" id="CLU_078295_4_0_1"/>
<dbReference type="InParanoid" id="P61832"/>
<dbReference type="OMA" id="HIFAEMA"/>
<dbReference type="OrthoDB" id="842664at2759"/>
<dbReference type="Proteomes" id="UP000002530">
    <property type="component" value="Chromosome 1"/>
</dbReference>
<dbReference type="GO" id="GO:0000786">
    <property type="term" value="C:nucleosome"/>
    <property type="evidence" value="ECO:0007669"/>
    <property type="project" value="UniProtKB-KW"/>
</dbReference>
<dbReference type="GO" id="GO:0005634">
    <property type="term" value="C:nucleus"/>
    <property type="evidence" value="ECO:0007669"/>
    <property type="project" value="UniProtKB-SubCell"/>
</dbReference>
<dbReference type="GO" id="GO:0003677">
    <property type="term" value="F:DNA binding"/>
    <property type="evidence" value="ECO:0007669"/>
    <property type="project" value="UniProtKB-KW"/>
</dbReference>
<dbReference type="GO" id="GO:0046982">
    <property type="term" value="F:protein heterodimerization activity"/>
    <property type="evidence" value="ECO:0007669"/>
    <property type="project" value="InterPro"/>
</dbReference>
<dbReference type="GO" id="GO:0030527">
    <property type="term" value="F:structural constituent of chromatin"/>
    <property type="evidence" value="ECO:0007669"/>
    <property type="project" value="InterPro"/>
</dbReference>
<dbReference type="CDD" id="cd22911">
    <property type="entry name" value="HFD_H3"/>
    <property type="match status" value="1"/>
</dbReference>
<dbReference type="FunFam" id="1.10.20.10:FF:000010">
    <property type="entry name" value="Histone H3"/>
    <property type="match status" value="1"/>
</dbReference>
<dbReference type="Gene3D" id="1.10.20.10">
    <property type="entry name" value="Histone, subunit A"/>
    <property type="match status" value="1"/>
</dbReference>
<dbReference type="InterPro" id="IPR009072">
    <property type="entry name" value="Histone-fold"/>
</dbReference>
<dbReference type="InterPro" id="IPR007125">
    <property type="entry name" value="Histone_H2A/H2B/H3"/>
</dbReference>
<dbReference type="InterPro" id="IPR000164">
    <property type="entry name" value="Histone_H3/CENP-A"/>
</dbReference>
<dbReference type="PANTHER" id="PTHR11426">
    <property type="entry name" value="HISTONE H3"/>
    <property type="match status" value="1"/>
</dbReference>
<dbReference type="Pfam" id="PF00125">
    <property type="entry name" value="Histone"/>
    <property type="match status" value="1"/>
</dbReference>
<dbReference type="PRINTS" id="PR00622">
    <property type="entry name" value="HISTONEH3"/>
</dbReference>
<dbReference type="SMART" id="SM00428">
    <property type="entry name" value="H3"/>
    <property type="match status" value="1"/>
</dbReference>
<dbReference type="SUPFAM" id="SSF47113">
    <property type="entry name" value="Histone-fold"/>
    <property type="match status" value="1"/>
</dbReference>
<dbReference type="PROSITE" id="PS00322">
    <property type="entry name" value="HISTONE_H3_1"/>
    <property type="match status" value="1"/>
</dbReference>
<dbReference type="PROSITE" id="PS00959">
    <property type="entry name" value="HISTONE_H3_2"/>
    <property type="match status" value="1"/>
</dbReference>
<feature type="initiator methionine" description="Removed" evidence="1">
    <location>
        <position position="1"/>
    </location>
</feature>
<feature type="chain" id="PRO_0000221357" description="Histone H3">
    <location>
        <begin position="2"/>
        <end position="136"/>
    </location>
</feature>
<feature type="region of interest" description="Disordered" evidence="2">
    <location>
        <begin position="1"/>
        <end position="43"/>
    </location>
</feature>
<feature type="modified residue" description="N6,N6,N6-trimethyllysine; alternate" evidence="1">
    <location>
        <position position="5"/>
    </location>
</feature>
<feature type="modified residue" description="N6,N6-dimethyllysine; alternate" evidence="1">
    <location>
        <position position="5"/>
    </location>
</feature>
<feature type="modified residue" description="N6-methyllysine; alternate" evidence="1">
    <location>
        <position position="5"/>
    </location>
</feature>
<feature type="modified residue" description="N6-acetyllysine; alternate" evidence="1">
    <location>
        <position position="10"/>
    </location>
</feature>
<feature type="modified residue" description="N6-methyllysine; alternate" evidence="1">
    <location>
        <position position="10"/>
    </location>
</feature>
<feature type="modified residue" description="Phosphoserine" evidence="1">
    <location>
        <position position="11"/>
    </location>
</feature>
<feature type="modified residue" description="N6,N6-dimethyllysine; alternate" evidence="1">
    <location>
        <position position="15"/>
    </location>
</feature>
<feature type="modified residue" description="N6-acetyllysine; alternate" evidence="1">
    <location>
        <position position="15"/>
    </location>
</feature>
<feature type="modified residue" description="N6-methyllysine; alternate" evidence="1">
    <location>
        <position position="15"/>
    </location>
</feature>
<feature type="modified residue" description="N6-acetyllysine; alternate" evidence="1">
    <location>
        <position position="19"/>
    </location>
</feature>
<feature type="modified residue" description="N6-methyllysine; alternate" evidence="1">
    <location>
        <position position="19"/>
    </location>
</feature>
<feature type="modified residue" description="N6-acetyllysine; alternate" evidence="1">
    <location>
        <position position="24"/>
    </location>
</feature>
<feature type="modified residue" description="N6-methyllysine; alternate" evidence="1">
    <location>
        <position position="24"/>
    </location>
</feature>
<feature type="modified residue" description="N6,N6,N6-trimethyllysine; alternate" evidence="1">
    <location>
        <position position="28"/>
    </location>
</feature>
<feature type="modified residue" description="N6,N6-dimethyllysine; alternate" evidence="1">
    <location>
        <position position="28"/>
    </location>
</feature>
<feature type="modified residue" description="N6-acetyllysine; alternate" evidence="1">
    <location>
        <position position="28"/>
    </location>
</feature>
<feature type="modified residue" description="N6-methyllysine; alternate" evidence="1">
    <location>
        <position position="28"/>
    </location>
</feature>
<feature type="modified residue" description="N6,N6,N6-trimethyllysine; alternate" evidence="1">
    <location>
        <position position="37"/>
    </location>
</feature>
<feature type="modified residue" description="N6,N6-dimethyllysine; alternate" evidence="1">
    <location>
        <position position="37"/>
    </location>
</feature>
<feature type="modified residue" description="N6-acetyllysine; alternate" evidence="1">
    <location>
        <position position="37"/>
    </location>
</feature>
<feature type="modified residue" description="N6-methyllysine; alternate" evidence="1">
    <location>
        <position position="37"/>
    </location>
</feature>
<feature type="modified residue" description="N6-acetyllysine" evidence="1">
    <location>
        <position position="57"/>
    </location>
</feature>
<feature type="modified residue" description="N6-acetyllysine" evidence="1">
    <location>
        <position position="65"/>
    </location>
</feature>
<feature type="modified residue" description="N6,N6,N6-trimethyllysine; alternate" evidence="1">
    <location>
        <position position="80"/>
    </location>
</feature>
<feature type="modified residue" description="N6,N6-dimethyllysine; alternate" evidence="1">
    <location>
        <position position="80"/>
    </location>
</feature>
<feature type="modified residue" description="N6-methyllysine; alternate" evidence="1">
    <location>
        <position position="80"/>
    </location>
</feature>
<name>H3_ASPFU</name>
<proteinExistence type="inferred from homology"/>
<gene>
    <name type="primary">hhtA</name>
    <name type="ORF">AfA35G10.19</name>
    <name type="ORF">AFUA_1G13790</name>
</gene>